<protein>
    <recommendedName>
        <fullName evidence="1">Phosphate acyltransferase</fullName>
        <ecNumber evidence="1">2.3.1.274</ecNumber>
    </recommendedName>
    <alternativeName>
        <fullName evidence="1">Acyl-ACP phosphotransacylase</fullName>
    </alternativeName>
    <alternativeName>
        <fullName evidence="1">Acyl-[acyl-carrier-protein]--phosphate acyltransferase</fullName>
    </alternativeName>
    <alternativeName>
        <fullName evidence="1">Phosphate-acyl-ACP acyltransferase</fullName>
    </alternativeName>
</protein>
<reference key="1">
    <citation type="journal article" date="2004" name="Nucleic Acids Res.">
        <title>Whole genome comparisons of serotype 4b and 1/2a strains of the food-borne pathogen Listeria monocytogenes reveal new insights into the core genome components of this species.</title>
        <authorList>
            <person name="Nelson K.E."/>
            <person name="Fouts D.E."/>
            <person name="Mongodin E.F."/>
            <person name="Ravel J."/>
            <person name="DeBoy R.T."/>
            <person name="Kolonay J.F."/>
            <person name="Rasko D.A."/>
            <person name="Angiuoli S.V."/>
            <person name="Gill S.R."/>
            <person name="Paulsen I.T."/>
            <person name="Peterson J.D."/>
            <person name="White O."/>
            <person name="Nelson W.C."/>
            <person name="Nierman W.C."/>
            <person name="Beanan M.J."/>
            <person name="Brinkac L.M."/>
            <person name="Daugherty S.C."/>
            <person name="Dodson R.J."/>
            <person name="Durkin A.S."/>
            <person name="Madupu R."/>
            <person name="Haft D.H."/>
            <person name="Selengut J."/>
            <person name="Van Aken S.E."/>
            <person name="Khouri H.M."/>
            <person name="Fedorova N."/>
            <person name="Forberger H.A."/>
            <person name="Tran B."/>
            <person name="Kathariou S."/>
            <person name="Wonderling L.D."/>
            <person name="Uhlich G.A."/>
            <person name="Bayles D.O."/>
            <person name="Luchansky J.B."/>
            <person name="Fraser C.M."/>
        </authorList>
    </citation>
    <scope>NUCLEOTIDE SEQUENCE [LARGE SCALE GENOMIC DNA]</scope>
    <source>
        <strain>F2365</strain>
    </source>
</reference>
<sequence>MKIAVDAMGGDHAPKEIVLGVMKAVAQYKDVEILLFGDETKINEYLTDKTRVKIIHTDEKIESDDEPVRAVKRKKKASMVLAAQAVKDGEADACISAGNTGALMSTGLFVIGRIKGIDRPALAPTLPTVTGKGFVMLDLGANAEAKPEHLLQFGLMGSVYAEKVRKIDRPRVALLNIGTEETKGNDLTKKSFELMKNQDAYEFIGNIEARDLLMDVADVVVTDGFTGNMVLKSIEGTGAAFLSMLKMSLLNGFKNKVAASFLKKDLMALKAKMDYSEYGGACLFGVQAPVVKAHGSSNANGIFTTIRQVREMVEKQVVETIKAEVDKVKVGGTESND</sequence>
<name>PLSX_LISMF</name>
<dbReference type="EC" id="2.3.1.274" evidence="1"/>
<dbReference type="EMBL" id="AE017262">
    <property type="protein sequence ID" value="AAT04607.1"/>
    <property type="molecule type" value="Genomic_DNA"/>
</dbReference>
<dbReference type="RefSeq" id="WP_003723870.1">
    <property type="nucleotide sequence ID" value="NC_002973.6"/>
</dbReference>
<dbReference type="SMR" id="Q71YK7"/>
<dbReference type="KEGG" id="lmf:LMOf2365_1837"/>
<dbReference type="HOGENOM" id="CLU_039379_1_1_9"/>
<dbReference type="UniPathway" id="UPA00085"/>
<dbReference type="GO" id="GO:0005737">
    <property type="term" value="C:cytoplasm"/>
    <property type="evidence" value="ECO:0007669"/>
    <property type="project" value="UniProtKB-SubCell"/>
</dbReference>
<dbReference type="GO" id="GO:0043811">
    <property type="term" value="F:phosphate:acyl-[acyl carrier protein] acyltransferase activity"/>
    <property type="evidence" value="ECO:0007669"/>
    <property type="project" value="UniProtKB-UniRule"/>
</dbReference>
<dbReference type="GO" id="GO:0006633">
    <property type="term" value="P:fatty acid biosynthetic process"/>
    <property type="evidence" value="ECO:0007669"/>
    <property type="project" value="UniProtKB-UniRule"/>
</dbReference>
<dbReference type="GO" id="GO:0008654">
    <property type="term" value="P:phospholipid biosynthetic process"/>
    <property type="evidence" value="ECO:0007669"/>
    <property type="project" value="UniProtKB-KW"/>
</dbReference>
<dbReference type="Gene3D" id="3.40.718.10">
    <property type="entry name" value="Isopropylmalate Dehydrogenase"/>
    <property type="match status" value="1"/>
</dbReference>
<dbReference type="HAMAP" id="MF_00019">
    <property type="entry name" value="PlsX"/>
    <property type="match status" value="1"/>
</dbReference>
<dbReference type="InterPro" id="IPR003664">
    <property type="entry name" value="FA_synthesis"/>
</dbReference>
<dbReference type="InterPro" id="IPR012281">
    <property type="entry name" value="Phospholipid_synth_PlsX-like"/>
</dbReference>
<dbReference type="NCBIfam" id="TIGR00182">
    <property type="entry name" value="plsX"/>
    <property type="match status" value="1"/>
</dbReference>
<dbReference type="PANTHER" id="PTHR30100">
    <property type="entry name" value="FATTY ACID/PHOSPHOLIPID SYNTHESIS PROTEIN PLSX"/>
    <property type="match status" value="1"/>
</dbReference>
<dbReference type="PANTHER" id="PTHR30100:SF1">
    <property type="entry name" value="PHOSPHATE ACYLTRANSFERASE"/>
    <property type="match status" value="1"/>
</dbReference>
<dbReference type="Pfam" id="PF02504">
    <property type="entry name" value="FA_synthesis"/>
    <property type="match status" value="1"/>
</dbReference>
<dbReference type="PIRSF" id="PIRSF002465">
    <property type="entry name" value="Phsphlp_syn_PlsX"/>
    <property type="match status" value="1"/>
</dbReference>
<dbReference type="SUPFAM" id="SSF53659">
    <property type="entry name" value="Isocitrate/Isopropylmalate dehydrogenase-like"/>
    <property type="match status" value="1"/>
</dbReference>
<comment type="function">
    <text evidence="1">Catalyzes the reversible formation of acyl-phosphate (acyl-PO(4)) from acyl-[acyl-carrier-protein] (acyl-ACP). This enzyme utilizes acyl-ACP as fatty acyl donor, but not acyl-CoA.</text>
</comment>
<comment type="catalytic activity">
    <reaction evidence="1">
        <text>a fatty acyl-[ACP] + phosphate = an acyl phosphate + holo-[ACP]</text>
        <dbReference type="Rhea" id="RHEA:42292"/>
        <dbReference type="Rhea" id="RHEA-COMP:9685"/>
        <dbReference type="Rhea" id="RHEA-COMP:14125"/>
        <dbReference type="ChEBI" id="CHEBI:43474"/>
        <dbReference type="ChEBI" id="CHEBI:59918"/>
        <dbReference type="ChEBI" id="CHEBI:64479"/>
        <dbReference type="ChEBI" id="CHEBI:138651"/>
        <dbReference type="EC" id="2.3.1.274"/>
    </reaction>
</comment>
<comment type="pathway">
    <text evidence="1">Lipid metabolism; phospholipid metabolism.</text>
</comment>
<comment type="subunit">
    <text evidence="1">Homodimer. Probably interacts with PlsY.</text>
</comment>
<comment type="subcellular location">
    <subcellularLocation>
        <location evidence="1">Cytoplasm</location>
    </subcellularLocation>
    <text evidence="1">Associated with the membrane possibly through PlsY.</text>
</comment>
<comment type="similarity">
    <text evidence="1">Belongs to the PlsX family.</text>
</comment>
<accession>Q71YK7</accession>
<feature type="chain" id="PRO_0000189899" description="Phosphate acyltransferase">
    <location>
        <begin position="1"/>
        <end position="337"/>
    </location>
</feature>
<keyword id="KW-0963">Cytoplasm</keyword>
<keyword id="KW-0444">Lipid biosynthesis</keyword>
<keyword id="KW-0443">Lipid metabolism</keyword>
<keyword id="KW-0594">Phospholipid biosynthesis</keyword>
<keyword id="KW-1208">Phospholipid metabolism</keyword>
<keyword id="KW-0808">Transferase</keyword>
<evidence type="ECO:0000255" key="1">
    <source>
        <dbReference type="HAMAP-Rule" id="MF_00019"/>
    </source>
</evidence>
<proteinExistence type="inferred from homology"/>
<organism>
    <name type="scientific">Listeria monocytogenes serotype 4b (strain F2365)</name>
    <dbReference type="NCBI Taxonomy" id="265669"/>
    <lineage>
        <taxon>Bacteria</taxon>
        <taxon>Bacillati</taxon>
        <taxon>Bacillota</taxon>
        <taxon>Bacilli</taxon>
        <taxon>Bacillales</taxon>
        <taxon>Listeriaceae</taxon>
        <taxon>Listeria</taxon>
    </lineage>
</organism>
<gene>
    <name evidence="1" type="primary">plsX</name>
    <name type="ordered locus">LMOf2365_1837</name>
</gene>